<reference key="1">
    <citation type="journal article" date="2003" name="Mol. Microbiol.">
        <title>Genome-based analysis of virulence genes in a non-biofilm-forming Staphylococcus epidermidis strain (ATCC 12228).</title>
        <authorList>
            <person name="Zhang Y.-Q."/>
            <person name="Ren S.-X."/>
            <person name="Li H.-L."/>
            <person name="Wang Y.-X."/>
            <person name="Fu G."/>
            <person name="Yang J."/>
            <person name="Qin Z.-Q."/>
            <person name="Miao Y.-G."/>
            <person name="Wang W.-Y."/>
            <person name="Chen R.-S."/>
            <person name="Shen Y."/>
            <person name="Chen Z."/>
            <person name="Yuan Z.-H."/>
            <person name="Zhao G.-P."/>
            <person name="Qu D."/>
            <person name="Danchin A."/>
            <person name="Wen Y.-M."/>
        </authorList>
    </citation>
    <scope>NUCLEOTIDE SEQUENCE [LARGE SCALE GENOMIC DNA]</scope>
    <source>
        <strain>ATCC 12228 / FDA PCI 1200</strain>
    </source>
</reference>
<proteinExistence type="inferred from homology"/>
<sequence>MKVVKDMIPTKPHDVIWTDAQWQSIYAKGQDILVAAAAGSGKTAVLVERIIQRILRDDVDVDRLLVVTFTNLSAREMKHRVDKRIQEASFKDPNNEHLKNQRIKIHQAQISTLHSFCLKLIQQHYDVLDIDPHFRTSSEAENILLLEQTIDDVLEQHYDKLDPHFIELTEQLSSDRNDDQFRSIIKQLYFFSIANPQPFEWLNQLAQPYKEENKQQQLMQLINDLAMIFMKAGYEELQKSYDLFSMMESVDKQLEVIETERMFITKAIEGKVLNTDVITQHEFMSRFPAINSKIKEANEGMEDALNEAKQHYDKYKSLVMKVKNDYFSRNAEDLQRDMQQLAPRVAYLAQIVQDVIQSFGVQKRSRNILDFSDYEHFALCILTNEDGSPSRIAETYREHFKEILVDEYQDTNRVQEKILSCIKTGEEHDGNLFMVGDVKQSIYKFRQADPSLFIEKYNRFSSSGNESGLRIDLSQNFRSRQEVLSTTNYLFKHMMDEQVGEISYDDAAQLYFGAPYDEVSHPVQLRALVEASSENSDLTGSEQEANYIVEQVKDIINHQNVYDMKTGQYRKATYKDIVILERSFGQARNLQQAFKNNDIPFHVNSKEGYFEQTEVRLVLSFLRTIDNPLQDIYLVGLMRSVIYQFTEEELAEIRVVSPHDDYFYQSIKNYMIDEKADSRLVDKLNRFIQDIQKYQNYSQSQPVYQLIDKFYNDHFVIQYFSGLIGGKGRRANLYGLFNKAVEFENSSFRGLFQFIRFIDELIDRKKDFGEENVVGPNDNVVRMMTIHSSKGLEFPFVIYSGLSKKFNKGDLNAPVILNQQYGLGMDYFDVNKDMAFPSLASVAYRAINEKELISEEMRLIYVALTRAKEQLILVGRVKDEKSLIKYEQLAVSDTHIAVNERLTATNPFVLIYGVLAKHQSPSLPNDQRFERDIDQLNSEVKPRVSIVIDHYEDVSTEEVVNDNEIRTIEELKAINTGNEDVKIKIHQQLSYDYPFKVNTMKPSKQSVSELKRQLETEESNTNYDRVRQYRIGVASYERPKFLTQTKKRKANEIGTLMHTVMQHLPFREQRLTKDELFQYIDRLIDKQLIDEDAKEDIRIDEIMHFIDGPLYMEIAQADNVYTELPFVVNQIKVDGLTSEDEDVSIIQGMIDLIYESDGQFYFVDYKTDAFNRRKGMSDEEIGNQLKEKYQIQMTYYRNTLETILKRPVKGYLYFFKFGTLEIDD</sequence>
<accession>Q8CPT9</accession>
<dbReference type="EC" id="3.1.-.-" evidence="1"/>
<dbReference type="EC" id="5.6.2.4" evidence="1"/>
<dbReference type="EMBL" id="AE015929">
    <property type="protein sequence ID" value="AAO04261.1"/>
    <property type="molecule type" value="Genomic_DNA"/>
</dbReference>
<dbReference type="RefSeq" id="NP_764219.1">
    <property type="nucleotide sequence ID" value="NC_004461.1"/>
</dbReference>
<dbReference type="SMR" id="Q8CPT9"/>
<dbReference type="KEGG" id="sep:SE_0664"/>
<dbReference type="PATRIC" id="fig|176280.10.peg.637"/>
<dbReference type="eggNOG" id="COG1074">
    <property type="taxonomic scope" value="Bacteria"/>
</dbReference>
<dbReference type="HOGENOM" id="CLU_001114_3_1_9"/>
<dbReference type="OrthoDB" id="9810135at2"/>
<dbReference type="Proteomes" id="UP000001411">
    <property type="component" value="Chromosome"/>
</dbReference>
<dbReference type="GO" id="GO:0005829">
    <property type="term" value="C:cytosol"/>
    <property type="evidence" value="ECO:0007669"/>
    <property type="project" value="TreeGrafter"/>
</dbReference>
<dbReference type="GO" id="GO:0033202">
    <property type="term" value="C:DNA helicase complex"/>
    <property type="evidence" value="ECO:0007669"/>
    <property type="project" value="TreeGrafter"/>
</dbReference>
<dbReference type="GO" id="GO:0043138">
    <property type="term" value="F:3'-5' DNA helicase activity"/>
    <property type="evidence" value="ECO:0007669"/>
    <property type="project" value="UniProtKB-UniRule"/>
</dbReference>
<dbReference type="GO" id="GO:0008408">
    <property type="term" value="F:3'-5' exonuclease activity"/>
    <property type="evidence" value="ECO:0007669"/>
    <property type="project" value="UniProtKB-UniRule"/>
</dbReference>
<dbReference type="GO" id="GO:0005524">
    <property type="term" value="F:ATP binding"/>
    <property type="evidence" value="ECO:0007669"/>
    <property type="project" value="UniProtKB-UniRule"/>
</dbReference>
<dbReference type="GO" id="GO:0016887">
    <property type="term" value="F:ATP hydrolysis activity"/>
    <property type="evidence" value="ECO:0007669"/>
    <property type="project" value="RHEA"/>
</dbReference>
<dbReference type="GO" id="GO:0003690">
    <property type="term" value="F:double-stranded DNA binding"/>
    <property type="evidence" value="ECO:0007669"/>
    <property type="project" value="UniProtKB-UniRule"/>
</dbReference>
<dbReference type="GO" id="GO:0000724">
    <property type="term" value="P:double-strand break repair via homologous recombination"/>
    <property type="evidence" value="ECO:0007669"/>
    <property type="project" value="UniProtKB-UniRule"/>
</dbReference>
<dbReference type="CDD" id="cd17932">
    <property type="entry name" value="DEXQc_UvrD"/>
    <property type="match status" value="1"/>
</dbReference>
<dbReference type="FunFam" id="3.40.50.300:FF:001196">
    <property type="entry name" value="ATP-dependent helicase/nuclease subunit A"/>
    <property type="match status" value="1"/>
</dbReference>
<dbReference type="FunFam" id="3.40.50.300:FF:001236">
    <property type="entry name" value="ATP-dependent helicase/nuclease subunit A"/>
    <property type="match status" value="1"/>
</dbReference>
<dbReference type="Gene3D" id="3.90.320.10">
    <property type="match status" value="1"/>
</dbReference>
<dbReference type="Gene3D" id="3.40.50.300">
    <property type="entry name" value="P-loop containing nucleotide triphosphate hydrolases"/>
    <property type="match status" value="4"/>
</dbReference>
<dbReference type="Gene3D" id="1.10.486.10">
    <property type="entry name" value="PCRA, domain 4"/>
    <property type="match status" value="1"/>
</dbReference>
<dbReference type="HAMAP" id="MF_01451">
    <property type="entry name" value="AddA"/>
    <property type="match status" value="1"/>
</dbReference>
<dbReference type="InterPro" id="IPR014152">
    <property type="entry name" value="AddA"/>
</dbReference>
<dbReference type="InterPro" id="IPR014017">
    <property type="entry name" value="DNA_helicase_UvrD-like_C"/>
</dbReference>
<dbReference type="InterPro" id="IPR000212">
    <property type="entry name" value="DNA_helicase_UvrD/REP"/>
</dbReference>
<dbReference type="InterPro" id="IPR027417">
    <property type="entry name" value="P-loop_NTPase"/>
</dbReference>
<dbReference type="InterPro" id="IPR011604">
    <property type="entry name" value="PDDEXK-like_dom_sf"/>
</dbReference>
<dbReference type="InterPro" id="IPR038726">
    <property type="entry name" value="PDDEXK_AddAB-type"/>
</dbReference>
<dbReference type="InterPro" id="IPR011335">
    <property type="entry name" value="Restrct_endonuc-II-like"/>
</dbReference>
<dbReference type="InterPro" id="IPR014016">
    <property type="entry name" value="UvrD-like_ATP-bd"/>
</dbReference>
<dbReference type="NCBIfam" id="TIGR02785">
    <property type="entry name" value="addA_Gpos"/>
    <property type="match status" value="1"/>
</dbReference>
<dbReference type="PANTHER" id="PTHR11070:SF48">
    <property type="entry name" value="ATP-DEPENDENT HELICASE_NUCLEASE SUBUNIT A"/>
    <property type="match status" value="1"/>
</dbReference>
<dbReference type="PANTHER" id="PTHR11070">
    <property type="entry name" value="UVRD / RECB / PCRA DNA HELICASE FAMILY MEMBER"/>
    <property type="match status" value="1"/>
</dbReference>
<dbReference type="Pfam" id="PF12705">
    <property type="entry name" value="PDDEXK_1"/>
    <property type="match status" value="1"/>
</dbReference>
<dbReference type="Pfam" id="PF00580">
    <property type="entry name" value="UvrD-helicase"/>
    <property type="match status" value="1"/>
</dbReference>
<dbReference type="Pfam" id="PF13361">
    <property type="entry name" value="UvrD_C"/>
    <property type="match status" value="1"/>
</dbReference>
<dbReference type="SUPFAM" id="SSF52540">
    <property type="entry name" value="P-loop containing nucleoside triphosphate hydrolases"/>
    <property type="match status" value="1"/>
</dbReference>
<dbReference type="SUPFAM" id="SSF52980">
    <property type="entry name" value="Restriction endonuclease-like"/>
    <property type="match status" value="1"/>
</dbReference>
<dbReference type="PROSITE" id="PS51198">
    <property type="entry name" value="UVRD_HELICASE_ATP_BIND"/>
    <property type="match status" value="1"/>
</dbReference>
<dbReference type="PROSITE" id="PS51217">
    <property type="entry name" value="UVRD_HELICASE_CTER"/>
    <property type="match status" value="1"/>
</dbReference>
<keyword id="KW-0067">ATP-binding</keyword>
<keyword id="KW-0227">DNA damage</keyword>
<keyword id="KW-0234">DNA repair</keyword>
<keyword id="KW-0238">DNA-binding</keyword>
<keyword id="KW-0269">Exonuclease</keyword>
<keyword id="KW-0347">Helicase</keyword>
<keyword id="KW-0378">Hydrolase</keyword>
<keyword id="KW-0413">Isomerase</keyword>
<keyword id="KW-0540">Nuclease</keyword>
<keyword id="KW-0547">Nucleotide-binding</keyword>
<feature type="chain" id="PRO_0000379322" description="ATP-dependent helicase/nuclease subunit A">
    <location>
        <begin position="1"/>
        <end position="1224"/>
    </location>
</feature>
<feature type="domain" description="UvrD-like helicase ATP-binding" evidence="1">
    <location>
        <begin position="15"/>
        <end position="480"/>
    </location>
</feature>
<feature type="domain" description="UvrD-like helicase C-terminal" evidence="1">
    <location>
        <begin position="497"/>
        <end position="791"/>
    </location>
</feature>
<feature type="binding site" evidence="1">
    <location>
        <begin position="36"/>
        <end position="43"/>
    </location>
    <ligand>
        <name>ATP</name>
        <dbReference type="ChEBI" id="CHEBI:30616"/>
    </ligand>
</feature>
<gene>
    <name evidence="1" type="primary">addA</name>
    <name type="ordered locus">SE_0664</name>
</gene>
<protein>
    <recommendedName>
        <fullName evidence="1">ATP-dependent helicase/nuclease subunit A</fullName>
        <ecNumber evidence="1">3.1.-.-</ecNumber>
        <ecNumber evidence="1">5.6.2.4</ecNumber>
    </recommendedName>
    <alternativeName>
        <fullName evidence="1">ATP-dependent helicase/nuclease AddA</fullName>
    </alternativeName>
    <alternativeName>
        <fullName evidence="1">DNA 3'-5' helicase AddA</fullName>
    </alternativeName>
</protein>
<evidence type="ECO:0000255" key="1">
    <source>
        <dbReference type="HAMAP-Rule" id="MF_01451"/>
    </source>
</evidence>
<name>ADDA_STAES</name>
<comment type="function">
    <text evidence="1">The heterodimer acts as both an ATP-dependent DNA helicase and an ATP-dependent, dual-direction single-stranded exonuclease. Recognizes the chi site generating a DNA molecule suitable for the initiation of homologous recombination. The AddA nuclease domain is required for chi fragment generation; this subunit has the helicase and 3' -&gt; 5' nuclease activities.</text>
</comment>
<comment type="catalytic activity">
    <reaction evidence="1">
        <text>Couples ATP hydrolysis with the unwinding of duplex DNA by translocating in the 3'-5' direction.</text>
        <dbReference type="EC" id="5.6.2.4"/>
    </reaction>
</comment>
<comment type="catalytic activity">
    <reaction evidence="1">
        <text>ATP + H2O = ADP + phosphate + H(+)</text>
        <dbReference type="Rhea" id="RHEA:13065"/>
        <dbReference type="ChEBI" id="CHEBI:15377"/>
        <dbReference type="ChEBI" id="CHEBI:15378"/>
        <dbReference type="ChEBI" id="CHEBI:30616"/>
        <dbReference type="ChEBI" id="CHEBI:43474"/>
        <dbReference type="ChEBI" id="CHEBI:456216"/>
        <dbReference type="EC" id="5.6.2.4"/>
    </reaction>
</comment>
<comment type="cofactor">
    <cofactor evidence="1">
        <name>Mg(2+)</name>
        <dbReference type="ChEBI" id="CHEBI:18420"/>
    </cofactor>
</comment>
<comment type="subunit">
    <text evidence="1">Heterodimer of AddA and AddB/RexB.</text>
</comment>
<comment type="similarity">
    <text evidence="1">Belongs to the helicase family. AddA subfamily.</text>
</comment>
<organism>
    <name type="scientific">Staphylococcus epidermidis (strain ATCC 12228 / FDA PCI 1200)</name>
    <dbReference type="NCBI Taxonomy" id="176280"/>
    <lineage>
        <taxon>Bacteria</taxon>
        <taxon>Bacillati</taxon>
        <taxon>Bacillota</taxon>
        <taxon>Bacilli</taxon>
        <taxon>Bacillales</taxon>
        <taxon>Staphylococcaceae</taxon>
        <taxon>Staphylococcus</taxon>
    </lineage>
</organism>